<dbReference type="EMBL" id="CU329670">
    <property type="protein sequence ID" value="CAA92303.1"/>
    <property type="molecule type" value="Genomic_DNA"/>
</dbReference>
<dbReference type="PIR" id="T37513">
    <property type="entry name" value="T37513"/>
</dbReference>
<dbReference type="RefSeq" id="NP_592799.1">
    <property type="nucleotide sequence ID" value="NM_001018199.2"/>
</dbReference>
<dbReference type="SMR" id="Q10081"/>
<dbReference type="BioGRID" id="279413">
    <property type="interactions" value="3"/>
</dbReference>
<dbReference type="STRING" id="284812.Q10081"/>
<dbReference type="iPTMnet" id="Q10081"/>
<dbReference type="PaxDb" id="4896-SPAC11D3.02c.1"/>
<dbReference type="EnsemblFungi" id="SPAC11D3.02c.1">
    <property type="protein sequence ID" value="SPAC11D3.02c.1:pep"/>
    <property type="gene ID" value="SPAC11D3.02c"/>
</dbReference>
<dbReference type="KEGG" id="spo:2542974"/>
<dbReference type="PomBase" id="SPAC11D3.02c"/>
<dbReference type="VEuPathDB" id="FungiDB:SPAC11D3.02c"/>
<dbReference type="eggNOG" id="ENOG502SAET">
    <property type="taxonomic scope" value="Eukaryota"/>
</dbReference>
<dbReference type="HOGENOM" id="CLU_056607_3_1_1"/>
<dbReference type="InParanoid" id="Q10081"/>
<dbReference type="OMA" id="DIPHIDM"/>
<dbReference type="PhylomeDB" id="Q10081"/>
<dbReference type="PRO" id="PR:Q10081"/>
<dbReference type="Proteomes" id="UP000002485">
    <property type="component" value="Chromosome I"/>
</dbReference>
<dbReference type="GO" id="GO:0005829">
    <property type="term" value="C:cytosol"/>
    <property type="evidence" value="ECO:0007005"/>
    <property type="project" value="PomBase"/>
</dbReference>
<dbReference type="GO" id="GO:0005634">
    <property type="term" value="C:nucleus"/>
    <property type="evidence" value="ECO:0007005"/>
    <property type="project" value="PomBase"/>
</dbReference>
<dbReference type="GO" id="GO:0016747">
    <property type="term" value="F:acyltransferase activity, transferring groups other than amino-acyl groups"/>
    <property type="evidence" value="ECO:0000318"/>
    <property type="project" value="GO_Central"/>
</dbReference>
<dbReference type="CDD" id="cd04301">
    <property type="entry name" value="NAT_SF"/>
    <property type="match status" value="1"/>
</dbReference>
<dbReference type="Gene3D" id="3.40.630.30">
    <property type="match status" value="1"/>
</dbReference>
<dbReference type="InterPro" id="IPR016181">
    <property type="entry name" value="Acyl_CoA_acyltransferase"/>
</dbReference>
<dbReference type="InterPro" id="IPR000182">
    <property type="entry name" value="GNAT_dom"/>
</dbReference>
<dbReference type="InterPro" id="IPR039143">
    <property type="entry name" value="GNPNAT1-like"/>
</dbReference>
<dbReference type="PANTHER" id="PTHR13355">
    <property type="entry name" value="GLUCOSAMINE 6-PHOSPHATE N-ACETYLTRANSFERASE"/>
    <property type="match status" value="1"/>
</dbReference>
<dbReference type="PANTHER" id="PTHR13355:SF11">
    <property type="entry name" value="GLUCOSAMINE 6-PHOSPHATE N-ACETYLTRANSFERASE"/>
    <property type="match status" value="1"/>
</dbReference>
<dbReference type="Pfam" id="PF13673">
    <property type="entry name" value="Acetyltransf_10"/>
    <property type="match status" value="1"/>
</dbReference>
<dbReference type="SUPFAM" id="SSF55729">
    <property type="entry name" value="Acyl-CoA N-acyltransferases (Nat)"/>
    <property type="match status" value="1"/>
</dbReference>
<dbReference type="PROSITE" id="PS51186">
    <property type="entry name" value="GNAT"/>
    <property type="match status" value="1"/>
</dbReference>
<reference key="1">
    <citation type="journal article" date="2002" name="Nature">
        <title>The genome sequence of Schizosaccharomyces pombe.</title>
        <authorList>
            <person name="Wood V."/>
            <person name="Gwilliam R."/>
            <person name="Rajandream M.A."/>
            <person name="Lyne M.H."/>
            <person name="Lyne R."/>
            <person name="Stewart A."/>
            <person name="Sgouros J.G."/>
            <person name="Peat N."/>
            <person name="Hayles J."/>
            <person name="Baker S.G."/>
            <person name="Basham D."/>
            <person name="Bowman S."/>
            <person name="Brooks K."/>
            <person name="Brown D."/>
            <person name="Brown S."/>
            <person name="Chillingworth T."/>
            <person name="Churcher C.M."/>
            <person name="Collins M."/>
            <person name="Connor R."/>
            <person name="Cronin A."/>
            <person name="Davis P."/>
            <person name="Feltwell T."/>
            <person name="Fraser A."/>
            <person name="Gentles S."/>
            <person name="Goble A."/>
            <person name="Hamlin N."/>
            <person name="Harris D.E."/>
            <person name="Hidalgo J."/>
            <person name="Hodgson G."/>
            <person name="Holroyd S."/>
            <person name="Hornsby T."/>
            <person name="Howarth S."/>
            <person name="Huckle E.J."/>
            <person name="Hunt S."/>
            <person name="Jagels K."/>
            <person name="James K.D."/>
            <person name="Jones L."/>
            <person name="Jones M."/>
            <person name="Leather S."/>
            <person name="McDonald S."/>
            <person name="McLean J."/>
            <person name="Mooney P."/>
            <person name="Moule S."/>
            <person name="Mungall K.L."/>
            <person name="Murphy L.D."/>
            <person name="Niblett D."/>
            <person name="Odell C."/>
            <person name="Oliver K."/>
            <person name="O'Neil S."/>
            <person name="Pearson D."/>
            <person name="Quail M.A."/>
            <person name="Rabbinowitsch E."/>
            <person name="Rutherford K.M."/>
            <person name="Rutter S."/>
            <person name="Saunders D."/>
            <person name="Seeger K."/>
            <person name="Sharp S."/>
            <person name="Skelton J."/>
            <person name="Simmonds M.N."/>
            <person name="Squares R."/>
            <person name="Squares S."/>
            <person name="Stevens K."/>
            <person name="Taylor K."/>
            <person name="Taylor R.G."/>
            <person name="Tivey A."/>
            <person name="Walsh S.V."/>
            <person name="Warren T."/>
            <person name="Whitehead S."/>
            <person name="Woodward J.R."/>
            <person name="Volckaert G."/>
            <person name="Aert R."/>
            <person name="Robben J."/>
            <person name="Grymonprez B."/>
            <person name="Weltjens I."/>
            <person name="Vanstreels E."/>
            <person name="Rieger M."/>
            <person name="Schaefer M."/>
            <person name="Mueller-Auer S."/>
            <person name="Gabel C."/>
            <person name="Fuchs M."/>
            <person name="Duesterhoeft A."/>
            <person name="Fritzc C."/>
            <person name="Holzer E."/>
            <person name="Moestl D."/>
            <person name="Hilbert H."/>
            <person name="Borzym K."/>
            <person name="Langer I."/>
            <person name="Beck A."/>
            <person name="Lehrach H."/>
            <person name="Reinhardt R."/>
            <person name="Pohl T.M."/>
            <person name="Eger P."/>
            <person name="Zimmermann W."/>
            <person name="Wedler H."/>
            <person name="Wambutt R."/>
            <person name="Purnelle B."/>
            <person name="Goffeau A."/>
            <person name="Cadieu E."/>
            <person name="Dreano S."/>
            <person name="Gloux S."/>
            <person name="Lelaure V."/>
            <person name="Mottier S."/>
            <person name="Galibert F."/>
            <person name="Aves S.J."/>
            <person name="Xiang Z."/>
            <person name="Hunt C."/>
            <person name="Moore K."/>
            <person name="Hurst S.M."/>
            <person name="Lucas M."/>
            <person name="Rochet M."/>
            <person name="Gaillardin C."/>
            <person name="Tallada V.A."/>
            <person name="Garzon A."/>
            <person name="Thode G."/>
            <person name="Daga R.R."/>
            <person name="Cruzado L."/>
            <person name="Jimenez J."/>
            <person name="Sanchez M."/>
            <person name="del Rey F."/>
            <person name="Benito J."/>
            <person name="Dominguez A."/>
            <person name="Revuelta J.L."/>
            <person name="Moreno S."/>
            <person name="Armstrong J."/>
            <person name="Forsburg S.L."/>
            <person name="Cerutti L."/>
            <person name="Lowe T."/>
            <person name="McCombie W.R."/>
            <person name="Paulsen I."/>
            <person name="Potashkin J."/>
            <person name="Shpakovski G.V."/>
            <person name="Ussery D."/>
            <person name="Barrell B.G."/>
            <person name="Nurse P."/>
        </authorList>
    </citation>
    <scope>NUCLEOTIDE SEQUENCE [LARGE SCALE GENOMIC DNA]</scope>
    <source>
        <strain>972 / ATCC 24843</strain>
    </source>
</reference>
<organism>
    <name type="scientific">Schizosaccharomyces pombe (strain 972 / ATCC 24843)</name>
    <name type="common">Fission yeast</name>
    <dbReference type="NCBI Taxonomy" id="284812"/>
    <lineage>
        <taxon>Eukaryota</taxon>
        <taxon>Fungi</taxon>
        <taxon>Dikarya</taxon>
        <taxon>Ascomycota</taxon>
        <taxon>Taphrinomycotina</taxon>
        <taxon>Schizosaccharomycetes</taxon>
        <taxon>Schizosaccharomycetales</taxon>
        <taxon>Schizosaccharomycetaceae</taxon>
        <taxon>Schizosaccharomyces</taxon>
    </lineage>
</organism>
<accession>Q10081</accession>
<feature type="chain" id="PRO_0000201930" description="UPF0039 protein C11D3.02c">
    <location>
        <begin position="1"/>
        <end position="150"/>
    </location>
</feature>
<feature type="domain" description="N-acetyltransferase" evidence="1">
    <location>
        <begin position="9"/>
        <end position="150"/>
    </location>
</feature>
<keyword id="KW-1185">Reference proteome</keyword>
<comment type="similarity">
    <text evidence="2">Belongs to the UPF0039 (ElaA) family.</text>
</comment>
<gene>
    <name type="ORF">SPAC11D3.02c</name>
</gene>
<proteinExistence type="inferred from homology"/>
<sequence length="150" mass="17414">MSNLEFVYKYFNSLDVKELYDIYLLRTNVFVVEQKCAYPEVDEIDLKCGHLMLRNANGKLVAYARLIPEQQQTVRIGRVVVDPDERKNGYGRKLMLQALETSKQEFSSSKTFVLSSQEYAQPLYRSVGFKKCSDAYLEDGIPHVEMRLEL</sequence>
<evidence type="ECO:0000255" key="1">
    <source>
        <dbReference type="PROSITE-ProRule" id="PRU00532"/>
    </source>
</evidence>
<evidence type="ECO:0000305" key="2"/>
<name>YAO2_SCHPO</name>
<protein>
    <recommendedName>
        <fullName>UPF0039 protein C11D3.02c</fullName>
    </recommendedName>
</protein>